<name>TBA1_ELEIN</name>
<sequence>MRECISIHIGQAGIQVGNACWELYCLEHGIQADGQMPGDKTIGGGDDAFNTFFSETGAGKHVPRAVFVDLEPTVIDEVRTGTYRQLFHPEQLISGKEDAANNFARGHYTIGKEIVDLCLDRIRKLADNCTGLQGFLVFNAVGGGTGSGLGSLLLERLSVDYGKKSKLGFTVYPSPQVSTSVVEPYNSVLSTHSLLEHTDVAVLLDNEAIYDICRRSLDIERPTYTNLNRLVSQVISSLTASLRFDGALNVDVNEFQTNLVPYPRIHFMLSSYAPVISAEKAYHEQLSVAEITNSAFEPSSMMAKCDPRHGKYMACCLMYRGDVVPKDVNAAVATIKTKRTIQFVDWCPTGFKCGINYQPPSVVPGGDLAKVQRAVCMISNSTSVVEVFSRIDHKFDLMYAKRAFVHWYVGEGMEEGEFSEAREDLAALEKDYEEVGAEFDEGEEGDEGDEY</sequence>
<proteinExistence type="evidence at transcript level"/>
<comment type="function">
    <text>Tubulin is the major constituent of microtubules, a cylinder consisting of laterally associated linear protofilaments composed of alpha- and beta-tubulin heterodimers. Microtubules grow by the addition of GTP-tubulin dimers to the microtubule end, where a stabilizing cap forms. Below the cap, tubulin dimers are in GDP-bound state, owing to GTPase activity of alpha-tubulin.</text>
</comment>
<comment type="catalytic activity">
    <reaction evidence="2">
        <text>GTP + H2O = GDP + phosphate + H(+)</text>
        <dbReference type="Rhea" id="RHEA:19669"/>
        <dbReference type="ChEBI" id="CHEBI:15377"/>
        <dbReference type="ChEBI" id="CHEBI:15378"/>
        <dbReference type="ChEBI" id="CHEBI:37565"/>
        <dbReference type="ChEBI" id="CHEBI:43474"/>
        <dbReference type="ChEBI" id="CHEBI:58189"/>
    </reaction>
    <physiologicalReaction direction="left-to-right" evidence="2">
        <dbReference type="Rhea" id="RHEA:19670"/>
    </physiologicalReaction>
</comment>
<comment type="cofactor">
    <cofactor evidence="2">
        <name>Mg(2+)</name>
        <dbReference type="ChEBI" id="CHEBI:18420"/>
    </cofactor>
</comment>
<comment type="subunit">
    <text>Dimer of alpha and beta chains. A typical microtubule is a hollow water-filled tube with an outer diameter of 25 nm and an inner diameter of 15 nM. Alpha-beta heterodimers associate head-to-tail to form protofilaments running lengthwise along the microtubule wall with the beta-tubulin subunit facing the microtubule plus end conferring a structural polarity. Microtubules usually have 13 protofilaments but different protofilament numbers can be found in some organisms and specialized cells.</text>
</comment>
<comment type="subcellular location">
    <subcellularLocation>
        <location>Cytoplasm</location>
        <location>Cytoskeleton</location>
    </subcellularLocation>
</comment>
<comment type="PTM">
    <text evidence="1">Undergoes a tyrosination/detyrosination cycle, the cyclic removal and re-addition of a C-terminal tyrosine residue by the enzymes tubulin tyrosine carboxypeptidase (TTCP) and tubulin tyrosine ligase (TTL), respectively.</text>
</comment>
<comment type="PTM">
    <text evidence="1">Acetylation of alpha chains at Lys-40 stabilizes microtubules and affects affinity and processivity of microtubule motors. This modification has a role in multiple cellular functions, ranging from cell motility, cell cycle progression or cell differentiation to intracellular trafficking and signaling (By similarity).</text>
</comment>
<comment type="miscellaneous">
    <text>Dinitroaniline herbicides (such as trifluralin and oryzalin) are antimicrotubule drugs that bind to tubulins and inhibit polymerization. Prolonged use of these chemicals has resulted in the selection of resistant (R) and intermediately resistant (I) biotypes.</text>
</comment>
<comment type="similarity">
    <text evidence="5">Belongs to the tubulin family.</text>
</comment>
<accession>O22347</accession>
<accession>O65805</accession>
<evidence type="ECO:0000250" key="1"/>
<evidence type="ECO:0000250" key="2">
    <source>
        <dbReference type="UniProtKB" id="P68363"/>
    </source>
</evidence>
<evidence type="ECO:0000269" key="3">
    <source>
    </source>
</evidence>
<evidence type="ECO:0000269" key="4">
    <source>
    </source>
</evidence>
<evidence type="ECO:0000305" key="5"/>
<dbReference type="EC" id="3.6.5.-" evidence="2"/>
<dbReference type="EMBL" id="AF008120">
    <property type="protein sequence ID" value="AAC05717.1"/>
    <property type="molecule type" value="mRNA"/>
</dbReference>
<dbReference type="EMBL" id="AJ005598">
    <property type="protein sequence ID" value="CAA06618.1"/>
    <property type="molecule type" value="mRNA"/>
</dbReference>
<dbReference type="EMBL" id="AJ005599">
    <property type="protein sequence ID" value="CAA06619.1"/>
    <property type="molecule type" value="mRNA"/>
</dbReference>
<dbReference type="SMR" id="O22347"/>
<dbReference type="GO" id="GO:0005737">
    <property type="term" value="C:cytoplasm"/>
    <property type="evidence" value="ECO:0007669"/>
    <property type="project" value="UniProtKB-KW"/>
</dbReference>
<dbReference type="GO" id="GO:0005874">
    <property type="term" value="C:microtubule"/>
    <property type="evidence" value="ECO:0007669"/>
    <property type="project" value="UniProtKB-KW"/>
</dbReference>
<dbReference type="GO" id="GO:0005525">
    <property type="term" value="F:GTP binding"/>
    <property type="evidence" value="ECO:0007669"/>
    <property type="project" value="UniProtKB-KW"/>
</dbReference>
<dbReference type="GO" id="GO:0016787">
    <property type="term" value="F:hydrolase activity"/>
    <property type="evidence" value="ECO:0007669"/>
    <property type="project" value="UniProtKB-KW"/>
</dbReference>
<dbReference type="GO" id="GO:0046872">
    <property type="term" value="F:metal ion binding"/>
    <property type="evidence" value="ECO:0007669"/>
    <property type="project" value="UniProtKB-KW"/>
</dbReference>
<dbReference type="GO" id="GO:0005200">
    <property type="term" value="F:structural constituent of cytoskeleton"/>
    <property type="evidence" value="ECO:0007669"/>
    <property type="project" value="InterPro"/>
</dbReference>
<dbReference type="GO" id="GO:0007017">
    <property type="term" value="P:microtubule-based process"/>
    <property type="evidence" value="ECO:0007669"/>
    <property type="project" value="InterPro"/>
</dbReference>
<dbReference type="CDD" id="cd02186">
    <property type="entry name" value="alpha_tubulin"/>
    <property type="match status" value="1"/>
</dbReference>
<dbReference type="FunFam" id="1.10.287.600:FF:000001">
    <property type="entry name" value="Tubulin alpha chain"/>
    <property type="match status" value="1"/>
</dbReference>
<dbReference type="FunFam" id="3.30.1330.20:FF:000001">
    <property type="entry name" value="Tubulin alpha chain"/>
    <property type="match status" value="1"/>
</dbReference>
<dbReference type="FunFam" id="3.40.50.1440:FF:000004">
    <property type="entry name" value="Tubulin alpha chain"/>
    <property type="match status" value="1"/>
</dbReference>
<dbReference type="Gene3D" id="1.10.287.600">
    <property type="entry name" value="Helix hairpin bin"/>
    <property type="match status" value="1"/>
</dbReference>
<dbReference type="Gene3D" id="3.30.1330.20">
    <property type="entry name" value="Tubulin/FtsZ, C-terminal domain"/>
    <property type="match status" value="1"/>
</dbReference>
<dbReference type="Gene3D" id="3.40.50.1440">
    <property type="entry name" value="Tubulin/FtsZ, GTPase domain"/>
    <property type="match status" value="1"/>
</dbReference>
<dbReference type="InterPro" id="IPR002452">
    <property type="entry name" value="Alpha_tubulin"/>
</dbReference>
<dbReference type="InterPro" id="IPR008280">
    <property type="entry name" value="Tub_FtsZ_C"/>
</dbReference>
<dbReference type="InterPro" id="IPR000217">
    <property type="entry name" value="Tubulin"/>
</dbReference>
<dbReference type="InterPro" id="IPR037103">
    <property type="entry name" value="Tubulin/FtsZ-like_C"/>
</dbReference>
<dbReference type="InterPro" id="IPR018316">
    <property type="entry name" value="Tubulin/FtsZ_2-layer-sand-dom"/>
</dbReference>
<dbReference type="InterPro" id="IPR036525">
    <property type="entry name" value="Tubulin/FtsZ_GTPase_sf"/>
</dbReference>
<dbReference type="InterPro" id="IPR023123">
    <property type="entry name" value="Tubulin_C"/>
</dbReference>
<dbReference type="InterPro" id="IPR017975">
    <property type="entry name" value="Tubulin_CS"/>
</dbReference>
<dbReference type="InterPro" id="IPR003008">
    <property type="entry name" value="Tubulin_FtsZ_GTPase"/>
</dbReference>
<dbReference type="PANTHER" id="PTHR11588">
    <property type="entry name" value="TUBULIN"/>
    <property type="match status" value="1"/>
</dbReference>
<dbReference type="Pfam" id="PF00091">
    <property type="entry name" value="Tubulin"/>
    <property type="match status" value="1"/>
</dbReference>
<dbReference type="Pfam" id="PF03953">
    <property type="entry name" value="Tubulin_C"/>
    <property type="match status" value="1"/>
</dbReference>
<dbReference type="PRINTS" id="PR01162">
    <property type="entry name" value="ALPHATUBULIN"/>
</dbReference>
<dbReference type="PRINTS" id="PR01161">
    <property type="entry name" value="TUBULIN"/>
</dbReference>
<dbReference type="SMART" id="SM00864">
    <property type="entry name" value="Tubulin"/>
    <property type="match status" value="1"/>
</dbReference>
<dbReference type="SMART" id="SM00865">
    <property type="entry name" value="Tubulin_C"/>
    <property type="match status" value="1"/>
</dbReference>
<dbReference type="SUPFAM" id="SSF55307">
    <property type="entry name" value="Tubulin C-terminal domain-like"/>
    <property type="match status" value="1"/>
</dbReference>
<dbReference type="SUPFAM" id="SSF52490">
    <property type="entry name" value="Tubulin nucleotide-binding domain-like"/>
    <property type="match status" value="1"/>
</dbReference>
<dbReference type="PROSITE" id="PS00227">
    <property type="entry name" value="TUBULIN"/>
    <property type="match status" value="1"/>
</dbReference>
<reference key="1">
    <citation type="journal article" date="1998" name="Plant Cell">
        <title>Alpha-tubulin missense mutations correlate with antimicrotubule drug resistance in Eleusine indica.</title>
        <authorList>
            <person name="Yamamoto E."/>
            <person name="Zeng L."/>
            <person name="Baird W.V."/>
        </authorList>
    </citation>
    <scope>NUCLEOTIDE SEQUENCE [MRNA]</scope>
    <scope>VARIANTS ILE-239 AND THR-268</scope>
    <source>
        <tissue>Leaf</tissue>
    </source>
</reference>
<reference key="2">
    <citation type="journal article" date="1998" name="Nature">
        <title>Herbicide resistance caused by spontaneous mutation of the cytoskeletal protein tubulin.</title>
        <authorList>
            <person name="Anthony R.G."/>
            <person name="Waldin T.R."/>
            <person name="Ray J.A."/>
            <person name="Bright S.W.J."/>
            <person name="Hussey P.J."/>
        </authorList>
    </citation>
    <scope>NUCLEOTIDE SEQUENCE [MRNA]</scope>
    <scope>VARIANT ILE-239</scope>
</reference>
<gene>
    <name type="primary">TUBA1</name>
    <name type="synonym">TUA1</name>
</gene>
<keyword id="KW-0007">Acetylation</keyword>
<keyword id="KW-0963">Cytoplasm</keyword>
<keyword id="KW-0206">Cytoskeleton</keyword>
<keyword id="KW-0342">GTP-binding</keyword>
<keyword id="KW-0378">Hydrolase</keyword>
<keyword id="KW-0460">Magnesium</keyword>
<keyword id="KW-0479">Metal-binding</keyword>
<keyword id="KW-0493">Microtubule</keyword>
<keyword id="KW-0547">Nucleotide-binding</keyword>
<feature type="chain" id="PRO_0000048162" description="Tubulin alpha-1 chain">
    <location>
        <begin position="1"/>
        <end position="451"/>
    </location>
</feature>
<feature type="active site" evidence="2">
    <location>
        <position position="254"/>
    </location>
</feature>
<feature type="binding site" evidence="2">
    <location>
        <position position="11"/>
    </location>
    <ligand>
        <name>GTP</name>
        <dbReference type="ChEBI" id="CHEBI:37565"/>
    </ligand>
</feature>
<feature type="binding site" evidence="2">
    <location>
        <position position="71"/>
    </location>
    <ligand>
        <name>GTP</name>
        <dbReference type="ChEBI" id="CHEBI:37565"/>
    </ligand>
</feature>
<feature type="binding site" evidence="2">
    <location>
        <position position="71"/>
    </location>
    <ligand>
        <name>Mg(2+)</name>
        <dbReference type="ChEBI" id="CHEBI:18420"/>
    </ligand>
</feature>
<feature type="binding site" evidence="2">
    <location>
        <position position="144"/>
    </location>
    <ligand>
        <name>GTP</name>
        <dbReference type="ChEBI" id="CHEBI:37565"/>
    </ligand>
</feature>
<feature type="binding site" evidence="2">
    <location>
        <position position="145"/>
    </location>
    <ligand>
        <name>GTP</name>
        <dbReference type="ChEBI" id="CHEBI:37565"/>
    </ligand>
</feature>
<feature type="binding site" evidence="2">
    <location>
        <position position="179"/>
    </location>
    <ligand>
        <name>GTP</name>
        <dbReference type="ChEBI" id="CHEBI:37565"/>
    </ligand>
</feature>
<feature type="binding site" evidence="2">
    <location>
        <position position="206"/>
    </location>
    <ligand>
        <name>GTP</name>
        <dbReference type="ChEBI" id="CHEBI:37565"/>
    </ligand>
</feature>
<feature type="binding site" evidence="2">
    <location>
        <position position="228"/>
    </location>
    <ligand>
        <name>GTP</name>
        <dbReference type="ChEBI" id="CHEBI:37565"/>
    </ligand>
</feature>
<feature type="site" description="Involved in polymerization">
    <location>
        <position position="451"/>
    </location>
</feature>
<feature type="modified residue" description="N6-acetyllysine" evidence="1">
    <location>
        <position position="40"/>
    </location>
</feature>
<feature type="sequence variant" description="In R biotype." evidence="3 4">
    <original>T</original>
    <variation>I</variation>
    <location>
        <position position="239"/>
    </location>
</feature>
<feature type="sequence variant" description="In I biotype." evidence="3">
    <original>M</original>
    <variation>T</variation>
    <location>
        <position position="268"/>
    </location>
</feature>
<organism>
    <name type="scientific">Eleusine indica</name>
    <name type="common">Goosegrass</name>
    <name type="synonym">Cynosurus indicus</name>
    <dbReference type="NCBI Taxonomy" id="29674"/>
    <lineage>
        <taxon>Eukaryota</taxon>
        <taxon>Viridiplantae</taxon>
        <taxon>Streptophyta</taxon>
        <taxon>Embryophyta</taxon>
        <taxon>Tracheophyta</taxon>
        <taxon>Spermatophyta</taxon>
        <taxon>Magnoliopsida</taxon>
        <taxon>Liliopsida</taxon>
        <taxon>Poales</taxon>
        <taxon>Poaceae</taxon>
        <taxon>PACMAD clade</taxon>
        <taxon>Chloridoideae</taxon>
        <taxon>Cynodonteae</taxon>
        <taxon>Eleusininae</taxon>
        <taxon>Eleusine</taxon>
    </lineage>
</organism>
<protein>
    <recommendedName>
        <fullName>Tubulin alpha-1 chain</fullName>
        <ecNumber evidence="2">3.6.5.-</ecNumber>
    </recommendedName>
    <alternativeName>
        <fullName>Alpha-1-tubulin</fullName>
    </alternativeName>
</protein>